<sequence>MSSQDTLTIAGKSYQSRLLVGTGKYKDFAETRAALDASGAQIVTVAIRRTNLGQNPGEPNLLDYVPPSRFTMLPNTAGCYTADDAVRTLRLARELLDGHDLVKLEVLGDPTNLFPNMPETLKAAKTLVDEGFKVMVYCTDDPIQCRMLEDIGVVAIMPLASLIGSGMGILNPWNLRLILDQSKLPVIVDAGLGTPSDAAVAMEMGCAAVLMNTAISGAKDPILMASAMKKGVEAGREAFLAGRVPRKLYSGVPSSPTEGLISTAK</sequence>
<evidence type="ECO:0000255" key="1">
    <source>
        <dbReference type="HAMAP-Rule" id="MF_00443"/>
    </source>
</evidence>
<proteinExistence type="inferred from homology"/>
<keyword id="KW-0963">Cytoplasm</keyword>
<keyword id="KW-1185">Reference proteome</keyword>
<keyword id="KW-0704">Schiff base</keyword>
<keyword id="KW-0784">Thiamine biosynthesis</keyword>
<keyword id="KW-0808">Transferase</keyword>
<gene>
    <name evidence="1" type="primary">thiG</name>
    <name type="ordered locus">BAV3069</name>
</gene>
<organism>
    <name type="scientific">Bordetella avium (strain 197N)</name>
    <dbReference type="NCBI Taxonomy" id="360910"/>
    <lineage>
        <taxon>Bacteria</taxon>
        <taxon>Pseudomonadati</taxon>
        <taxon>Pseudomonadota</taxon>
        <taxon>Betaproteobacteria</taxon>
        <taxon>Burkholderiales</taxon>
        <taxon>Alcaligenaceae</taxon>
        <taxon>Bordetella</taxon>
    </lineage>
</organism>
<accession>Q2KUI1</accession>
<dbReference type="EC" id="2.8.1.10" evidence="1"/>
<dbReference type="EMBL" id="AM167904">
    <property type="protein sequence ID" value="CAJ50679.1"/>
    <property type="molecule type" value="Genomic_DNA"/>
</dbReference>
<dbReference type="RefSeq" id="WP_012418707.1">
    <property type="nucleotide sequence ID" value="NC_010645.1"/>
</dbReference>
<dbReference type="SMR" id="Q2KUI1"/>
<dbReference type="STRING" id="360910.BAV3069"/>
<dbReference type="GeneID" id="92933673"/>
<dbReference type="KEGG" id="bav:BAV3069"/>
<dbReference type="eggNOG" id="COG2022">
    <property type="taxonomic scope" value="Bacteria"/>
</dbReference>
<dbReference type="HOGENOM" id="CLU_062233_1_1_4"/>
<dbReference type="OrthoDB" id="9805935at2"/>
<dbReference type="UniPathway" id="UPA00060"/>
<dbReference type="Proteomes" id="UP000001977">
    <property type="component" value="Chromosome"/>
</dbReference>
<dbReference type="GO" id="GO:0005737">
    <property type="term" value="C:cytoplasm"/>
    <property type="evidence" value="ECO:0007669"/>
    <property type="project" value="UniProtKB-SubCell"/>
</dbReference>
<dbReference type="GO" id="GO:1990107">
    <property type="term" value="F:thiazole synthase activity"/>
    <property type="evidence" value="ECO:0007669"/>
    <property type="project" value="UniProtKB-EC"/>
</dbReference>
<dbReference type="GO" id="GO:0009229">
    <property type="term" value="P:thiamine diphosphate biosynthetic process"/>
    <property type="evidence" value="ECO:0007669"/>
    <property type="project" value="UniProtKB-UniRule"/>
</dbReference>
<dbReference type="CDD" id="cd04728">
    <property type="entry name" value="ThiG"/>
    <property type="match status" value="1"/>
</dbReference>
<dbReference type="Gene3D" id="3.20.20.70">
    <property type="entry name" value="Aldolase class I"/>
    <property type="match status" value="1"/>
</dbReference>
<dbReference type="HAMAP" id="MF_00443">
    <property type="entry name" value="ThiG"/>
    <property type="match status" value="1"/>
</dbReference>
<dbReference type="InterPro" id="IPR013785">
    <property type="entry name" value="Aldolase_TIM"/>
</dbReference>
<dbReference type="InterPro" id="IPR033983">
    <property type="entry name" value="Thiazole_synthase_ThiG"/>
</dbReference>
<dbReference type="InterPro" id="IPR008867">
    <property type="entry name" value="ThiG"/>
</dbReference>
<dbReference type="PANTHER" id="PTHR34266">
    <property type="entry name" value="THIAZOLE SYNTHASE"/>
    <property type="match status" value="1"/>
</dbReference>
<dbReference type="PANTHER" id="PTHR34266:SF2">
    <property type="entry name" value="THIAZOLE SYNTHASE"/>
    <property type="match status" value="1"/>
</dbReference>
<dbReference type="Pfam" id="PF05690">
    <property type="entry name" value="ThiG"/>
    <property type="match status" value="1"/>
</dbReference>
<dbReference type="SUPFAM" id="SSF110399">
    <property type="entry name" value="ThiG-like"/>
    <property type="match status" value="1"/>
</dbReference>
<reference key="1">
    <citation type="journal article" date="2006" name="J. Bacteriol.">
        <title>Comparison of the genome sequence of the poultry pathogen Bordetella avium with those of B. bronchiseptica, B. pertussis, and B. parapertussis reveals extensive diversity in surface structures associated with host interaction.</title>
        <authorList>
            <person name="Sebaihia M."/>
            <person name="Preston A."/>
            <person name="Maskell D.J."/>
            <person name="Kuzmiak H."/>
            <person name="Connell T.D."/>
            <person name="King N.D."/>
            <person name="Orndorff P.E."/>
            <person name="Miyamoto D.M."/>
            <person name="Thomson N.R."/>
            <person name="Harris D."/>
            <person name="Goble A."/>
            <person name="Lord A."/>
            <person name="Murphy L."/>
            <person name="Quail M.A."/>
            <person name="Rutter S."/>
            <person name="Squares R."/>
            <person name="Squares S."/>
            <person name="Woodward J."/>
            <person name="Parkhill J."/>
            <person name="Temple L.M."/>
        </authorList>
    </citation>
    <scope>NUCLEOTIDE SEQUENCE [LARGE SCALE GENOMIC DNA]</scope>
    <source>
        <strain>197N</strain>
    </source>
</reference>
<protein>
    <recommendedName>
        <fullName evidence="1">Thiazole synthase</fullName>
        <ecNumber evidence="1">2.8.1.10</ecNumber>
    </recommendedName>
</protein>
<feature type="chain" id="PRO_0000236332" description="Thiazole synthase">
    <location>
        <begin position="1"/>
        <end position="265"/>
    </location>
</feature>
<feature type="active site" description="Schiff-base intermediate with DXP" evidence="1">
    <location>
        <position position="103"/>
    </location>
</feature>
<feature type="binding site" evidence="1">
    <location>
        <position position="164"/>
    </location>
    <ligand>
        <name>1-deoxy-D-xylulose 5-phosphate</name>
        <dbReference type="ChEBI" id="CHEBI:57792"/>
    </ligand>
</feature>
<feature type="binding site" evidence="1">
    <location>
        <begin position="190"/>
        <end position="191"/>
    </location>
    <ligand>
        <name>1-deoxy-D-xylulose 5-phosphate</name>
        <dbReference type="ChEBI" id="CHEBI:57792"/>
    </ligand>
</feature>
<feature type="binding site" evidence="1">
    <location>
        <begin position="212"/>
        <end position="213"/>
    </location>
    <ligand>
        <name>1-deoxy-D-xylulose 5-phosphate</name>
        <dbReference type="ChEBI" id="CHEBI:57792"/>
    </ligand>
</feature>
<name>THIG_BORA1</name>
<comment type="function">
    <text evidence="1">Catalyzes the rearrangement of 1-deoxy-D-xylulose 5-phosphate (DXP) to produce the thiazole phosphate moiety of thiamine. Sulfur is provided by the thiocarboxylate moiety of the carrier protein ThiS. In vitro, sulfur can be provided by H(2)S.</text>
</comment>
<comment type="catalytic activity">
    <reaction evidence="1">
        <text>[ThiS sulfur-carrier protein]-C-terminal-Gly-aminoethanethioate + 2-iminoacetate + 1-deoxy-D-xylulose 5-phosphate = [ThiS sulfur-carrier protein]-C-terminal Gly-Gly + 2-[(2R,5Z)-2-carboxy-4-methylthiazol-5(2H)-ylidene]ethyl phosphate + 2 H2O + H(+)</text>
        <dbReference type="Rhea" id="RHEA:26297"/>
        <dbReference type="Rhea" id="RHEA-COMP:12909"/>
        <dbReference type="Rhea" id="RHEA-COMP:19908"/>
        <dbReference type="ChEBI" id="CHEBI:15377"/>
        <dbReference type="ChEBI" id="CHEBI:15378"/>
        <dbReference type="ChEBI" id="CHEBI:57792"/>
        <dbReference type="ChEBI" id="CHEBI:62899"/>
        <dbReference type="ChEBI" id="CHEBI:77846"/>
        <dbReference type="ChEBI" id="CHEBI:90778"/>
        <dbReference type="ChEBI" id="CHEBI:232372"/>
        <dbReference type="EC" id="2.8.1.10"/>
    </reaction>
</comment>
<comment type="pathway">
    <text evidence="1">Cofactor biosynthesis; thiamine diphosphate biosynthesis.</text>
</comment>
<comment type="subunit">
    <text evidence="1">Homotetramer. Forms heterodimers with either ThiH or ThiS.</text>
</comment>
<comment type="subcellular location">
    <subcellularLocation>
        <location evidence="1">Cytoplasm</location>
    </subcellularLocation>
</comment>
<comment type="similarity">
    <text evidence="1">Belongs to the ThiG family.</text>
</comment>